<keyword id="KW-0342">GTP-binding</keyword>
<keyword id="KW-0547">Nucleotide-binding</keyword>
<keyword id="KW-1185">Reference proteome</keyword>
<keyword id="KW-0677">Repeat</keyword>
<keyword id="KW-0690">Ribosome biogenesis</keyword>
<sequence length="469" mass="51481">MLPTLVLVGRPNVGKSTLFNRLTGTRDALVHDLPGMTRDRHYGRGRIGGKPYLVVDTGGLEPVVKDGILAEMARQTLQAIDEADAIIFMVDARAGVTPQDKVIADRLRRVTSPVLLAVNKAEGMNRAVVTAEFHELGLGEPLAISGAHGDGIADLVAEALAPFPEEEEASDDFGVPKIALVGRPNVGKSTLVNALVGAERVIAFDQPGTTRDSIYVDFERGGKPYVLIDTAGVRRRGKVFETVEKFSVIKTLQAIEDANVVVLVLDARENISEQDAHLAGFVLETGRALVVAINKWDGLSAEQRDDVKRDIGRKLAFLDFARFNYISALKAKGLENLLKDIEAAHAAAFIKLSTPKLTRVLEMAVEQHAPPKNGLFRPKPRYAHQGGKNPPVIVLHGNALEGLRDDYKRYLESSFRKAFKLQGTPLRIQIKEDEGKNPFEGKKRAPLSESEATRMRRKKRVRRKVYGAD</sequence>
<protein>
    <recommendedName>
        <fullName evidence="1">GTPase Der</fullName>
    </recommendedName>
    <alternativeName>
        <fullName evidence="1">GTP-binding protein EngA</fullName>
    </alternativeName>
</protein>
<organism>
    <name type="scientific">Thiobacillus denitrificans (strain ATCC 25259 / T1)</name>
    <dbReference type="NCBI Taxonomy" id="292415"/>
    <lineage>
        <taxon>Bacteria</taxon>
        <taxon>Pseudomonadati</taxon>
        <taxon>Pseudomonadota</taxon>
        <taxon>Betaproteobacteria</taxon>
        <taxon>Nitrosomonadales</taxon>
        <taxon>Thiobacillaceae</taxon>
        <taxon>Thiobacillus</taxon>
    </lineage>
</organism>
<proteinExistence type="inferred from homology"/>
<name>DER_THIDA</name>
<gene>
    <name evidence="1" type="primary">der</name>
    <name type="synonym">engA</name>
    <name type="ordered locus">Tbd_0598</name>
</gene>
<evidence type="ECO:0000255" key="1">
    <source>
        <dbReference type="HAMAP-Rule" id="MF_00195"/>
    </source>
</evidence>
<evidence type="ECO:0000256" key="2">
    <source>
        <dbReference type="SAM" id="MobiDB-lite"/>
    </source>
</evidence>
<feature type="chain" id="PRO_1000011776" description="GTPase Der">
    <location>
        <begin position="1"/>
        <end position="469"/>
    </location>
</feature>
<feature type="domain" description="EngA-type G 1">
    <location>
        <begin position="3"/>
        <end position="167"/>
    </location>
</feature>
<feature type="domain" description="EngA-type G 2">
    <location>
        <begin position="176"/>
        <end position="349"/>
    </location>
</feature>
<feature type="domain" description="KH-like" evidence="1">
    <location>
        <begin position="350"/>
        <end position="436"/>
    </location>
</feature>
<feature type="region of interest" description="Disordered" evidence="2">
    <location>
        <begin position="432"/>
        <end position="469"/>
    </location>
</feature>
<feature type="compositionally biased region" description="Basic and acidic residues" evidence="2">
    <location>
        <begin position="432"/>
        <end position="443"/>
    </location>
</feature>
<feature type="compositionally biased region" description="Basic residues" evidence="2">
    <location>
        <begin position="455"/>
        <end position="469"/>
    </location>
</feature>
<feature type="binding site" evidence="1">
    <location>
        <begin position="9"/>
        <end position="16"/>
    </location>
    <ligand>
        <name>GTP</name>
        <dbReference type="ChEBI" id="CHEBI:37565"/>
        <label>1</label>
    </ligand>
</feature>
<feature type="binding site" evidence="1">
    <location>
        <begin position="56"/>
        <end position="60"/>
    </location>
    <ligand>
        <name>GTP</name>
        <dbReference type="ChEBI" id="CHEBI:37565"/>
        <label>1</label>
    </ligand>
</feature>
<feature type="binding site" evidence="1">
    <location>
        <begin position="119"/>
        <end position="122"/>
    </location>
    <ligand>
        <name>GTP</name>
        <dbReference type="ChEBI" id="CHEBI:37565"/>
        <label>1</label>
    </ligand>
</feature>
<feature type="binding site" evidence="1">
    <location>
        <begin position="182"/>
        <end position="189"/>
    </location>
    <ligand>
        <name>GTP</name>
        <dbReference type="ChEBI" id="CHEBI:37565"/>
        <label>2</label>
    </ligand>
</feature>
<feature type="binding site" evidence="1">
    <location>
        <begin position="229"/>
        <end position="233"/>
    </location>
    <ligand>
        <name>GTP</name>
        <dbReference type="ChEBI" id="CHEBI:37565"/>
        <label>2</label>
    </ligand>
</feature>
<feature type="binding site" evidence="1">
    <location>
        <begin position="294"/>
        <end position="297"/>
    </location>
    <ligand>
        <name>GTP</name>
        <dbReference type="ChEBI" id="CHEBI:37565"/>
        <label>2</label>
    </ligand>
</feature>
<accession>Q3SL66</accession>
<comment type="function">
    <text evidence="1">GTPase that plays an essential role in the late steps of ribosome biogenesis.</text>
</comment>
<comment type="subunit">
    <text evidence="1">Associates with the 50S ribosomal subunit.</text>
</comment>
<comment type="similarity">
    <text evidence="1">Belongs to the TRAFAC class TrmE-Era-EngA-EngB-Septin-like GTPase superfamily. EngA (Der) GTPase family.</text>
</comment>
<dbReference type="EMBL" id="CP000116">
    <property type="protein sequence ID" value="AAZ96551.1"/>
    <property type="molecule type" value="Genomic_DNA"/>
</dbReference>
<dbReference type="RefSeq" id="WP_011311110.1">
    <property type="nucleotide sequence ID" value="NC_007404.1"/>
</dbReference>
<dbReference type="SMR" id="Q3SL66"/>
<dbReference type="STRING" id="292415.Tbd_0598"/>
<dbReference type="KEGG" id="tbd:Tbd_0598"/>
<dbReference type="eggNOG" id="COG1160">
    <property type="taxonomic scope" value="Bacteria"/>
</dbReference>
<dbReference type="HOGENOM" id="CLU_016077_6_2_4"/>
<dbReference type="OrthoDB" id="9805918at2"/>
<dbReference type="Proteomes" id="UP000008291">
    <property type="component" value="Chromosome"/>
</dbReference>
<dbReference type="GO" id="GO:0016887">
    <property type="term" value="F:ATP hydrolysis activity"/>
    <property type="evidence" value="ECO:0007669"/>
    <property type="project" value="InterPro"/>
</dbReference>
<dbReference type="GO" id="GO:0005525">
    <property type="term" value="F:GTP binding"/>
    <property type="evidence" value="ECO:0007669"/>
    <property type="project" value="UniProtKB-UniRule"/>
</dbReference>
<dbReference type="GO" id="GO:0043022">
    <property type="term" value="F:ribosome binding"/>
    <property type="evidence" value="ECO:0007669"/>
    <property type="project" value="TreeGrafter"/>
</dbReference>
<dbReference type="GO" id="GO:0042254">
    <property type="term" value="P:ribosome biogenesis"/>
    <property type="evidence" value="ECO:0007669"/>
    <property type="project" value="UniProtKB-KW"/>
</dbReference>
<dbReference type="CDD" id="cd01894">
    <property type="entry name" value="EngA1"/>
    <property type="match status" value="1"/>
</dbReference>
<dbReference type="CDD" id="cd01895">
    <property type="entry name" value="EngA2"/>
    <property type="match status" value="1"/>
</dbReference>
<dbReference type="FunFam" id="3.30.300.20:FF:000004">
    <property type="entry name" value="GTPase Der"/>
    <property type="match status" value="1"/>
</dbReference>
<dbReference type="FunFam" id="3.40.50.300:FF:000040">
    <property type="entry name" value="GTPase Der"/>
    <property type="match status" value="1"/>
</dbReference>
<dbReference type="FunFam" id="3.40.50.300:FF:000057">
    <property type="entry name" value="GTPase Der"/>
    <property type="match status" value="1"/>
</dbReference>
<dbReference type="Gene3D" id="3.30.300.20">
    <property type="match status" value="1"/>
</dbReference>
<dbReference type="Gene3D" id="3.40.50.300">
    <property type="entry name" value="P-loop containing nucleotide triphosphate hydrolases"/>
    <property type="match status" value="2"/>
</dbReference>
<dbReference type="HAMAP" id="MF_00195">
    <property type="entry name" value="GTPase_Der"/>
    <property type="match status" value="1"/>
</dbReference>
<dbReference type="InterPro" id="IPR003593">
    <property type="entry name" value="AAA+_ATPase"/>
</dbReference>
<dbReference type="InterPro" id="IPR031166">
    <property type="entry name" value="G_ENGA"/>
</dbReference>
<dbReference type="InterPro" id="IPR006073">
    <property type="entry name" value="GTP-bd"/>
</dbReference>
<dbReference type="InterPro" id="IPR016484">
    <property type="entry name" value="GTPase_Der"/>
</dbReference>
<dbReference type="InterPro" id="IPR032859">
    <property type="entry name" value="KH_dom-like"/>
</dbReference>
<dbReference type="InterPro" id="IPR015946">
    <property type="entry name" value="KH_dom-like_a/b"/>
</dbReference>
<dbReference type="InterPro" id="IPR027417">
    <property type="entry name" value="P-loop_NTPase"/>
</dbReference>
<dbReference type="InterPro" id="IPR005225">
    <property type="entry name" value="Small_GTP-bd"/>
</dbReference>
<dbReference type="NCBIfam" id="TIGR03594">
    <property type="entry name" value="GTPase_EngA"/>
    <property type="match status" value="1"/>
</dbReference>
<dbReference type="NCBIfam" id="TIGR00231">
    <property type="entry name" value="small_GTP"/>
    <property type="match status" value="2"/>
</dbReference>
<dbReference type="PANTHER" id="PTHR43834">
    <property type="entry name" value="GTPASE DER"/>
    <property type="match status" value="1"/>
</dbReference>
<dbReference type="PANTHER" id="PTHR43834:SF6">
    <property type="entry name" value="GTPASE DER"/>
    <property type="match status" value="1"/>
</dbReference>
<dbReference type="Pfam" id="PF14714">
    <property type="entry name" value="KH_dom-like"/>
    <property type="match status" value="1"/>
</dbReference>
<dbReference type="Pfam" id="PF01926">
    <property type="entry name" value="MMR_HSR1"/>
    <property type="match status" value="2"/>
</dbReference>
<dbReference type="PIRSF" id="PIRSF006485">
    <property type="entry name" value="GTP-binding_EngA"/>
    <property type="match status" value="1"/>
</dbReference>
<dbReference type="PRINTS" id="PR00326">
    <property type="entry name" value="GTP1OBG"/>
</dbReference>
<dbReference type="SMART" id="SM00382">
    <property type="entry name" value="AAA"/>
    <property type="match status" value="2"/>
</dbReference>
<dbReference type="SUPFAM" id="SSF52540">
    <property type="entry name" value="P-loop containing nucleoside triphosphate hydrolases"/>
    <property type="match status" value="2"/>
</dbReference>
<dbReference type="PROSITE" id="PS51712">
    <property type="entry name" value="G_ENGA"/>
    <property type="match status" value="2"/>
</dbReference>
<reference key="1">
    <citation type="journal article" date="2006" name="J. Bacteriol.">
        <title>The genome sequence of the obligately chemolithoautotrophic, facultatively anaerobic bacterium Thiobacillus denitrificans.</title>
        <authorList>
            <person name="Beller H.R."/>
            <person name="Chain P.S."/>
            <person name="Letain T.E."/>
            <person name="Chakicherla A."/>
            <person name="Larimer F.W."/>
            <person name="Richardson P.M."/>
            <person name="Coleman M.A."/>
            <person name="Wood A.P."/>
            <person name="Kelly D.P."/>
        </authorList>
    </citation>
    <scope>NUCLEOTIDE SEQUENCE [LARGE SCALE GENOMIC DNA]</scope>
    <source>
        <strain>ATCC 25259 / T1</strain>
    </source>
</reference>